<name>TIM54_KLULA</name>
<reference key="1">
    <citation type="journal article" date="2004" name="Nature">
        <title>Genome evolution in yeasts.</title>
        <authorList>
            <person name="Dujon B."/>
            <person name="Sherman D."/>
            <person name="Fischer G."/>
            <person name="Durrens P."/>
            <person name="Casaregola S."/>
            <person name="Lafontaine I."/>
            <person name="de Montigny J."/>
            <person name="Marck C."/>
            <person name="Neuveglise C."/>
            <person name="Talla E."/>
            <person name="Goffard N."/>
            <person name="Frangeul L."/>
            <person name="Aigle M."/>
            <person name="Anthouard V."/>
            <person name="Babour A."/>
            <person name="Barbe V."/>
            <person name="Barnay S."/>
            <person name="Blanchin S."/>
            <person name="Beckerich J.-M."/>
            <person name="Beyne E."/>
            <person name="Bleykasten C."/>
            <person name="Boisrame A."/>
            <person name="Boyer J."/>
            <person name="Cattolico L."/>
            <person name="Confanioleri F."/>
            <person name="de Daruvar A."/>
            <person name="Despons L."/>
            <person name="Fabre E."/>
            <person name="Fairhead C."/>
            <person name="Ferry-Dumazet H."/>
            <person name="Groppi A."/>
            <person name="Hantraye F."/>
            <person name="Hennequin C."/>
            <person name="Jauniaux N."/>
            <person name="Joyet P."/>
            <person name="Kachouri R."/>
            <person name="Kerrest A."/>
            <person name="Koszul R."/>
            <person name="Lemaire M."/>
            <person name="Lesur I."/>
            <person name="Ma L."/>
            <person name="Muller H."/>
            <person name="Nicaud J.-M."/>
            <person name="Nikolski M."/>
            <person name="Oztas S."/>
            <person name="Ozier-Kalogeropoulos O."/>
            <person name="Pellenz S."/>
            <person name="Potier S."/>
            <person name="Richard G.-F."/>
            <person name="Straub M.-L."/>
            <person name="Suleau A."/>
            <person name="Swennen D."/>
            <person name="Tekaia F."/>
            <person name="Wesolowski-Louvel M."/>
            <person name="Westhof E."/>
            <person name="Wirth B."/>
            <person name="Zeniou-Meyer M."/>
            <person name="Zivanovic Y."/>
            <person name="Bolotin-Fukuhara M."/>
            <person name="Thierry A."/>
            <person name="Bouchier C."/>
            <person name="Caudron B."/>
            <person name="Scarpelli C."/>
            <person name="Gaillardin C."/>
            <person name="Weissenbach J."/>
            <person name="Wincker P."/>
            <person name="Souciet J.-L."/>
        </authorList>
    </citation>
    <scope>NUCLEOTIDE SEQUENCE [LARGE SCALE GENOMIC DNA]</scope>
    <source>
        <strain>ATCC 8585 / CBS 2359 / DSM 70799 / NBRC 1267 / NRRL Y-1140 / WM37</strain>
    </source>
</reference>
<organism>
    <name type="scientific">Kluyveromyces lactis (strain ATCC 8585 / CBS 2359 / DSM 70799 / NBRC 1267 / NRRL Y-1140 / WM37)</name>
    <name type="common">Yeast</name>
    <name type="synonym">Candida sphaerica</name>
    <dbReference type="NCBI Taxonomy" id="284590"/>
    <lineage>
        <taxon>Eukaryota</taxon>
        <taxon>Fungi</taxon>
        <taxon>Dikarya</taxon>
        <taxon>Ascomycota</taxon>
        <taxon>Saccharomycotina</taxon>
        <taxon>Saccharomycetes</taxon>
        <taxon>Saccharomycetales</taxon>
        <taxon>Saccharomycetaceae</taxon>
        <taxon>Kluyveromyces</taxon>
    </lineage>
</organism>
<protein>
    <recommendedName>
        <fullName>Mitochondrial import inner membrane translocase subunit TIM54</fullName>
    </recommendedName>
</protein>
<gene>
    <name type="primary">TIM54</name>
    <name type="ordered locus">KLLA0F01441g</name>
</gene>
<feature type="chain" id="PRO_0000228016" description="Mitochondrial import inner membrane translocase subunit TIM54">
    <location>
        <begin position="1"/>
        <end position="471"/>
    </location>
</feature>
<feature type="topological domain" description="Mitochondrial matrix" evidence="2">
    <location>
        <begin position="1"/>
        <end position="8"/>
    </location>
</feature>
<feature type="transmembrane region" description="Helical" evidence="2">
    <location>
        <begin position="9"/>
        <end position="25"/>
    </location>
</feature>
<feature type="topological domain" description="Mitochondrial intermembrane" evidence="2">
    <location>
        <begin position="26"/>
        <end position="471"/>
    </location>
</feature>
<feature type="region of interest" description="Disordered" evidence="3">
    <location>
        <begin position="272"/>
        <end position="317"/>
    </location>
</feature>
<feature type="compositionally biased region" description="Low complexity" evidence="3">
    <location>
        <begin position="281"/>
        <end position="300"/>
    </location>
</feature>
<dbReference type="EMBL" id="CR382126">
    <property type="protein sequence ID" value="CAG97852.1"/>
    <property type="molecule type" value="Genomic_DNA"/>
</dbReference>
<dbReference type="RefSeq" id="XP_455145.1">
    <property type="nucleotide sequence ID" value="XM_455145.1"/>
</dbReference>
<dbReference type="SMR" id="Q6CLP4"/>
<dbReference type="FunCoup" id="Q6CLP4">
    <property type="interactions" value="33"/>
</dbReference>
<dbReference type="STRING" id="284590.Q6CLP4"/>
<dbReference type="PaxDb" id="284590-Q6CLP4"/>
<dbReference type="KEGG" id="kla:KLLA0_F01441g"/>
<dbReference type="eggNOG" id="ENOG502QPMQ">
    <property type="taxonomic scope" value="Eukaryota"/>
</dbReference>
<dbReference type="HOGENOM" id="CLU_039097_0_0_1"/>
<dbReference type="InParanoid" id="Q6CLP4"/>
<dbReference type="OMA" id="RNWMIFF"/>
<dbReference type="Proteomes" id="UP000000598">
    <property type="component" value="Chromosome F"/>
</dbReference>
<dbReference type="GO" id="GO:0005743">
    <property type="term" value="C:mitochondrial inner membrane"/>
    <property type="evidence" value="ECO:0007669"/>
    <property type="project" value="UniProtKB-SubCell"/>
</dbReference>
<dbReference type="GO" id="GO:0015031">
    <property type="term" value="P:protein transport"/>
    <property type="evidence" value="ECO:0007669"/>
    <property type="project" value="UniProtKB-KW"/>
</dbReference>
<dbReference type="InterPro" id="IPR050187">
    <property type="entry name" value="Lipid_Phosphate_FormReg"/>
</dbReference>
<dbReference type="InterPro" id="IPR021056">
    <property type="entry name" value="Mt_import_IM_translocase_Tim54"/>
</dbReference>
<dbReference type="PANTHER" id="PTHR12358:SF101">
    <property type="entry name" value="MITOCHONDRIAL IMPORT INNER MEMBRANE TRANSLOCASE SUBUNIT TIM54"/>
    <property type="match status" value="1"/>
</dbReference>
<dbReference type="PANTHER" id="PTHR12358">
    <property type="entry name" value="SPHINGOSINE KINASE"/>
    <property type="match status" value="1"/>
</dbReference>
<dbReference type="Pfam" id="PF11711">
    <property type="entry name" value="Tim54"/>
    <property type="match status" value="1"/>
</dbReference>
<evidence type="ECO:0000250" key="1"/>
<evidence type="ECO:0000255" key="2"/>
<evidence type="ECO:0000256" key="3">
    <source>
        <dbReference type="SAM" id="MobiDB-lite"/>
    </source>
</evidence>
<evidence type="ECO:0000305" key="4"/>
<sequence length="471" mass="51943">MWKKLPSPGWLAFGTVVTVAGSGIAYDKYEQSQIRSLYVNHVRNEMSSSLSTNVKPRKLLVLVAPPPNDYLDTSLKLWRRWIKPILHSSGLDYEIVSGTKQGEIRTEIASRVRQLRKELIEQEQQQQHDAQSKKSRSWLDWFKWCRGVSTTPDPVSEESPAASFDTRSVLGIFYHNEPQPVVTEDSLLDPSVAGGVICVGRGAYKEYIAGVHEGILGPLEEPPKVVESDASSVTDTTASAVITENPSVKEISVTQPAETAVAAATVGTTMNETGAVNTDSTPAETIPAETTPTENTPIETTPDESSEEKEGPKISKPYILPSDYANASIPAELSKPLIIDPKTGAPAFFEQPLLVVAVPNLSGFTTIPTRIARFYQKRFLCEQVSHSTLAIVEAKSRPFTTTDLDLSAYEELDWPKSWVESGKERGSEWVQPLQGDDRVLQKFRVVEPAIVPSLQLKEDQSKKQELSPENK</sequence>
<accession>Q6CLP4</accession>
<keyword id="KW-0472">Membrane</keyword>
<keyword id="KW-0496">Mitochondrion</keyword>
<keyword id="KW-0999">Mitochondrion inner membrane</keyword>
<keyword id="KW-0653">Protein transport</keyword>
<keyword id="KW-1185">Reference proteome</keyword>
<keyword id="KW-0811">Translocation</keyword>
<keyword id="KW-0812">Transmembrane</keyword>
<keyword id="KW-1133">Transmembrane helix</keyword>
<keyword id="KW-0813">Transport</keyword>
<proteinExistence type="inferred from homology"/>
<comment type="function">
    <text evidence="1">Essential component of the TIM22 complex, a complex that mediates the import and insertion of multi-pass transmembrane proteins into the mitochondrial inner membrane. The TIM22 complex forms a twin-pore translocase that uses the membrane potential as external driving force (By similarity).</text>
</comment>
<comment type="subunit">
    <text evidence="1">Component of the TIM22 complex, whose core is composed of TIM22 and TIM54, associated with the 70 kDa heterohexamer composed of TIM9 and TIM10 (or TIM8 and TIM13).</text>
</comment>
<comment type="subcellular location">
    <subcellularLocation>
        <location evidence="1">Mitochondrion inner membrane</location>
        <topology evidence="1">Single-pass membrane protein</topology>
    </subcellularLocation>
</comment>
<comment type="similarity">
    <text evidence="4">Belongs to the TIM54 family.</text>
</comment>